<sequence>MAYPVQLGFQDAASPIMEELLYFHDHTLMIMFLISSLVLYIISLMLTTELMHTNTMDAQEVETVWTILPAAILILIALPSLRILYMMDEITTPSLTLKTMGHQWYWSYEYTDYENLCFDSYMVPSSDLKPGELRLLEVDNRIVLPTELSIRMLISSEDVLHSWAVPSLGVKTDAIPGRLNQATLMASRPGIYYGQCSEICGANHSFMPIVLELVPLKHFEEWLLSML</sequence>
<feature type="chain" id="PRO_0000183607" description="Cytochrome c oxidase subunit 2">
    <location>
        <begin position="1"/>
        <end position="227"/>
    </location>
</feature>
<feature type="topological domain" description="Mitochondrial intermembrane" evidence="3">
    <location>
        <begin position="1"/>
        <end position="14"/>
    </location>
</feature>
<feature type="transmembrane region" description="Helical; Name=I" evidence="3">
    <location>
        <begin position="15"/>
        <end position="45"/>
    </location>
</feature>
<feature type="topological domain" description="Mitochondrial matrix" evidence="3">
    <location>
        <begin position="46"/>
        <end position="59"/>
    </location>
</feature>
<feature type="transmembrane region" description="Helical; Name=II" evidence="3">
    <location>
        <begin position="60"/>
        <end position="87"/>
    </location>
</feature>
<feature type="topological domain" description="Mitochondrial intermembrane" evidence="3">
    <location>
        <begin position="88"/>
        <end position="227"/>
    </location>
</feature>
<feature type="binding site" evidence="3">
    <location>
        <position position="161"/>
    </location>
    <ligand>
        <name>Cu cation</name>
        <dbReference type="ChEBI" id="CHEBI:23378"/>
        <label>A1</label>
    </ligand>
</feature>
<feature type="binding site" evidence="3">
    <location>
        <position position="196"/>
    </location>
    <ligand>
        <name>Cu cation</name>
        <dbReference type="ChEBI" id="CHEBI:23378"/>
        <label>A1</label>
    </ligand>
</feature>
<feature type="binding site" evidence="3">
    <location>
        <position position="196"/>
    </location>
    <ligand>
        <name>Cu cation</name>
        <dbReference type="ChEBI" id="CHEBI:23378"/>
        <label>A2</label>
    </ligand>
</feature>
<feature type="binding site" evidence="3">
    <location>
        <position position="198"/>
    </location>
    <ligand>
        <name>Cu cation</name>
        <dbReference type="ChEBI" id="CHEBI:23378"/>
        <label>A2</label>
    </ligand>
</feature>
<feature type="binding site" evidence="3">
    <location>
        <position position="198"/>
    </location>
    <ligand>
        <name>Mg(2+)</name>
        <dbReference type="ChEBI" id="CHEBI:18420"/>
        <note>ligand shared with MT-CO1</note>
    </ligand>
</feature>
<feature type="binding site" evidence="3">
    <location>
        <position position="200"/>
    </location>
    <ligand>
        <name>Cu cation</name>
        <dbReference type="ChEBI" id="CHEBI:23378"/>
        <label>A1</label>
    </ligand>
</feature>
<feature type="binding site" evidence="3">
    <location>
        <position position="200"/>
    </location>
    <ligand>
        <name>Cu cation</name>
        <dbReference type="ChEBI" id="CHEBI:23378"/>
        <label>A2</label>
    </ligand>
</feature>
<feature type="binding site" evidence="3">
    <location>
        <position position="204"/>
    </location>
    <ligand>
        <name>Cu cation</name>
        <dbReference type="ChEBI" id="CHEBI:23378"/>
        <label>A2</label>
    </ligand>
</feature>
<feature type="binding site" evidence="3">
    <location>
        <position position="207"/>
    </location>
    <ligand>
        <name>Cu cation</name>
        <dbReference type="ChEBI" id="CHEBI:23378"/>
        <label>A1</label>
    </ligand>
</feature>
<accession>P98034</accession>
<name>COX2_HAPGR</name>
<reference key="1">
    <citation type="journal article" date="1994" name="J. Mol. Evol.">
        <title>Evolution of the primate cytochrome c oxidase subunit II gene.</title>
        <authorList>
            <person name="Adkins R.M."/>
            <person name="Honeycutt R.L."/>
        </authorList>
    </citation>
    <scope>NUCLEOTIDE SEQUENCE [GENOMIC DNA]</scope>
</reference>
<evidence type="ECO:0000250" key="1">
    <source>
        <dbReference type="UniProtKB" id="P00403"/>
    </source>
</evidence>
<evidence type="ECO:0000250" key="2">
    <source>
        <dbReference type="UniProtKB" id="P00410"/>
    </source>
</evidence>
<evidence type="ECO:0000250" key="3">
    <source>
        <dbReference type="UniProtKB" id="P68530"/>
    </source>
</evidence>
<evidence type="ECO:0000305" key="4"/>
<geneLocation type="mitochondrion"/>
<protein>
    <recommendedName>
        <fullName>Cytochrome c oxidase subunit 2</fullName>
        <ecNumber>7.1.1.9</ecNumber>
    </recommendedName>
    <alternativeName>
        <fullName>Cytochrome c oxidase polypeptide II</fullName>
    </alternativeName>
</protein>
<proteinExistence type="inferred from homology"/>
<organism>
    <name type="scientific">Hapalemur griseus</name>
    <name type="common">Gray gentle lemur</name>
    <name type="synonym">Eastern lesser bamboo lemur</name>
    <dbReference type="NCBI Taxonomy" id="13557"/>
    <lineage>
        <taxon>Eukaryota</taxon>
        <taxon>Metazoa</taxon>
        <taxon>Chordata</taxon>
        <taxon>Craniata</taxon>
        <taxon>Vertebrata</taxon>
        <taxon>Euteleostomi</taxon>
        <taxon>Mammalia</taxon>
        <taxon>Eutheria</taxon>
        <taxon>Euarchontoglires</taxon>
        <taxon>Primates</taxon>
        <taxon>Strepsirrhini</taxon>
        <taxon>Lemuriformes</taxon>
        <taxon>Lemuridae</taxon>
        <taxon>Hapalemur</taxon>
    </lineage>
</organism>
<gene>
    <name type="primary">MT-CO2</name>
    <name type="synonym">COII</name>
    <name type="synonym">COX2</name>
    <name type="synonym">COXII</name>
    <name type="synonym">MTCO2</name>
</gene>
<comment type="function">
    <text evidence="2">Component of the cytochrome c oxidase, the last enzyme in the mitochondrial electron transport chain which drives oxidative phosphorylation. The respiratory chain contains 3 multisubunit complexes succinate dehydrogenase (complex II, CII), ubiquinol-cytochrome c oxidoreductase (cytochrome b-c1 complex, complex III, CIII) and cytochrome c oxidase (complex IV, CIV), that cooperate to transfer electrons derived from NADH and succinate to molecular oxygen, creating an electrochemical gradient over the inner membrane that drives transmembrane transport and the ATP synthase. Cytochrome c oxidase is the component of the respiratory chain that catalyzes the reduction of oxygen to water. Electrons originating from reduced cytochrome c in the intermembrane space (IMS) are transferred via the dinuclear copper A center (CU(A)) of subunit 2 and heme A of subunit 1 to the active site in subunit 1, a binuclear center (BNC) formed by heme A3 and copper B (CU(B)). The BNC reduces molecular oxygen to 2 water molecules using 4 electrons from cytochrome c in the IMS and 4 protons from the mitochondrial matrix.</text>
</comment>
<comment type="catalytic activity">
    <reaction evidence="2">
        <text>4 Fe(II)-[cytochrome c] + O2 + 8 H(+)(in) = 4 Fe(III)-[cytochrome c] + 2 H2O + 4 H(+)(out)</text>
        <dbReference type="Rhea" id="RHEA:11436"/>
        <dbReference type="Rhea" id="RHEA-COMP:10350"/>
        <dbReference type="Rhea" id="RHEA-COMP:14399"/>
        <dbReference type="ChEBI" id="CHEBI:15377"/>
        <dbReference type="ChEBI" id="CHEBI:15378"/>
        <dbReference type="ChEBI" id="CHEBI:15379"/>
        <dbReference type="ChEBI" id="CHEBI:29033"/>
        <dbReference type="ChEBI" id="CHEBI:29034"/>
        <dbReference type="EC" id="7.1.1.9"/>
    </reaction>
    <physiologicalReaction direction="left-to-right" evidence="2">
        <dbReference type="Rhea" id="RHEA:11437"/>
    </physiologicalReaction>
</comment>
<comment type="cofactor">
    <cofactor evidence="3">
        <name>Cu cation</name>
        <dbReference type="ChEBI" id="CHEBI:23378"/>
    </cofactor>
    <text evidence="3">Binds a dinuclear copper A center per subunit.</text>
</comment>
<comment type="subunit">
    <text evidence="1 3">Component of the cytochrome c oxidase (complex IV, CIV), a multisubunit enzyme composed of 14 subunits. The complex is composed of a catalytic core of 3 subunits MT-CO1, MT-CO2 and MT-CO3, encoded in the mitochondrial DNA, and 11 supernumerary subunits COX4I, COX5A, COX5B, COX6A, COX6B, COX6C, COX7A, COX7B, COX7C, COX8 and NDUFA4, which are encoded in the nuclear genome. The complex exists as a monomer or a dimer and forms supercomplexes (SCs) in the inner mitochondrial membrane with NADH-ubiquinone oxidoreductase (complex I, CI) and ubiquinol-cytochrome c oxidoreductase (cytochrome b-c1 complex, complex III, CIII), resulting in different assemblies (supercomplex SCI(1)III(2)IV(1) and megacomplex MCI(2)III(2)IV(2)) (By similarity). Found in a complex with TMEM177, COA6, COX18, COX20, SCO1 and SCO2. Interacts with TMEM177 in a COX20-dependent manner. Interacts with COX20. Interacts with COX16 (By similarity).</text>
</comment>
<comment type="subcellular location">
    <subcellularLocation>
        <location evidence="3">Mitochondrion inner membrane</location>
        <topology evidence="3">Multi-pass membrane protein</topology>
    </subcellularLocation>
</comment>
<comment type="similarity">
    <text evidence="4">Belongs to the cytochrome c oxidase subunit 2 family.</text>
</comment>
<dbReference type="EC" id="7.1.1.9"/>
<dbReference type="EMBL" id="L22778">
    <property type="protein sequence ID" value="AAA20564.1"/>
    <property type="molecule type" value="Genomic_DNA"/>
</dbReference>
<dbReference type="PIR" id="I37081">
    <property type="entry name" value="I37081"/>
</dbReference>
<dbReference type="RefSeq" id="YP_008379011.1">
    <property type="nucleotide sequence ID" value="NC_021950.1"/>
</dbReference>
<dbReference type="SMR" id="P98034"/>
<dbReference type="GeneID" id="16489069"/>
<dbReference type="CTD" id="4513"/>
<dbReference type="GO" id="GO:0005743">
    <property type="term" value="C:mitochondrial inner membrane"/>
    <property type="evidence" value="ECO:0007669"/>
    <property type="project" value="UniProtKB-SubCell"/>
</dbReference>
<dbReference type="GO" id="GO:0045277">
    <property type="term" value="C:respiratory chain complex IV"/>
    <property type="evidence" value="ECO:0000250"/>
    <property type="project" value="UniProtKB"/>
</dbReference>
<dbReference type="GO" id="GO:0005507">
    <property type="term" value="F:copper ion binding"/>
    <property type="evidence" value="ECO:0007669"/>
    <property type="project" value="InterPro"/>
</dbReference>
<dbReference type="GO" id="GO:0004129">
    <property type="term" value="F:cytochrome-c oxidase activity"/>
    <property type="evidence" value="ECO:0007669"/>
    <property type="project" value="UniProtKB-EC"/>
</dbReference>
<dbReference type="GO" id="GO:0042773">
    <property type="term" value="P:ATP synthesis coupled electron transport"/>
    <property type="evidence" value="ECO:0007669"/>
    <property type="project" value="TreeGrafter"/>
</dbReference>
<dbReference type="CDD" id="cd13912">
    <property type="entry name" value="CcO_II_C"/>
    <property type="match status" value="1"/>
</dbReference>
<dbReference type="FunFam" id="1.10.287.90:FF:000001">
    <property type="entry name" value="Cytochrome c oxidase subunit 2"/>
    <property type="match status" value="1"/>
</dbReference>
<dbReference type="FunFam" id="2.60.40.420:FF:000001">
    <property type="entry name" value="Cytochrome c oxidase subunit 2"/>
    <property type="match status" value="1"/>
</dbReference>
<dbReference type="Gene3D" id="1.10.287.90">
    <property type="match status" value="1"/>
</dbReference>
<dbReference type="Gene3D" id="2.60.40.420">
    <property type="entry name" value="Cupredoxins - blue copper proteins"/>
    <property type="match status" value="1"/>
</dbReference>
<dbReference type="InterPro" id="IPR045187">
    <property type="entry name" value="CcO_II"/>
</dbReference>
<dbReference type="InterPro" id="IPR002429">
    <property type="entry name" value="CcO_II-like_C"/>
</dbReference>
<dbReference type="InterPro" id="IPR034210">
    <property type="entry name" value="CcO_II_C"/>
</dbReference>
<dbReference type="InterPro" id="IPR001505">
    <property type="entry name" value="Copper_CuA"/>
</dbReference>
<dbReference type="InterPro" id="IPR008972">
    <property type="entry name" value="Cupredoxin"/>
</dbReference>
<dbReference type="InterPro" id="IPR014222">
    <property type="entry name" value="Cyt_c_oxidase_su2"/>
</dbReference>
<dbReference type="InterPro" id="IPR011759">
    <property type="entry name" value="Cyt_c_oxidase_su2_TM_dom"/>
</dbReference>
<dbReference type="InterPro" id="IPR036257">
    <property type="entry name" value="Cyt_c_oxidase_su2_TM_sf"/>
</dbReference>
<dbReference type="NCBIfam" id="TIGR02866">
    <property type="entry name" value="CoxB"/>
    <property type="match status" value="1"/>
</dbReference>
<dbReference type="PANTHER" id="PTHR22888:SF9">
    <property type="entry name" value="CYTOCHROME C OXIDASE SUBUNIT 2"/>
    <property type="match status" value="1"/>
</dbReference>
<dbReference type="PANTHER" id="PTHR22888">
    <property type="entry name" value="CYTOCHROME C OXIDASE, SUBUNIT II"/>
    <property type="match status" value="1"/>
</dbReference>
<dbReference type="Pfam" id="PF00116">
    <property type="entry name" value="COX2"/>
    <property type="match status" value="1"/>
</dbReference>
<dbReference type="Pfam" id="PF02790">
    <property type="entry name" value="COX2_TM"/>
    <property type="match status" value="1"/>
</dbReference>
<dbReference type="PRINTS" id="PR01166">
    <property type="entry name" value="CYCOXIDASEII"/>
</dbReference>
<dbReference type="SUPFAM" id="SSF49503">
    <property type="entry name" value="Cupredoxins"/>
    <property type="match status" value="1"/>
</dbReference>
<dbReference type="SUPFAM" id="SSF81464">
    <property type="entry name" value="Cytochrome c oxidase subunit II-like, transmembrane region"/>
    <property type="match status" value="1"/>
</dbReference>
<dbReference type="PROSITE" id="PS00078">
    <property type="entry name" value="COX2"/>
    <property type="match status" value="1"/>
</dbReference>
<dbReference type="PROSITE" id="PS50857">
    <property type="entry name" value="COX2_CUA"/>
    <property type="match status" value="1"/>
</dbReference>
<dbReference type="PROSITE" id="PS50999">
    <property type="entry name" value="COX2_TM"/>
    <property type="match status" value="1"/>
</dbReference>
<keyword id="KW-0186">Copper</keyword>
<keyword id="KW-0249">Electron transport</keyword>
<keyword id="KW-0460">Magnesium</keyword>
<keyword id="KW-0472">Membrane</keyword>
<keyword id="KW-0479">Metal-binding</keyword>
<keyword id="KW-0496">Mitochondrion</keyword>
<keyword id="KW-0999">Mitochondrion inner membrane</keyword>
<keyword id="KW-0679">Respiratory chain</keyword>
<keyword id="KW-1278">Translocase</keyword>
<keyword id="KW-0812">Transmembrane</keyword>
<keyword id="KW-1133">Transmembrane helix</keyword>
<keyword id="KW-0813">Transport</keyword>